<sequence>MKNKYISKLLVGAATITLATMISNGEAKASENTQQTSTKHQTTQNNYVTDQQKAFYQVLHLKGITEEQRNQYIKTLREHPERAQEVFSESLKDSKNPDRRVAQQNAFYNVLKNDNLTEQEKNNYIAQIKENPDRSQQVWVESVQSSKAKERQNIENADKAIKDFQDNKAPHDKSAAYEANSKLPKDLRDKNNRFVEKVSIEKAIVRHDERVKSANDAISKLNVKDSIENRRLAQREVNKAPMDVKEHLQKQLDALVAQKDAEKKVAPKVEAPQIQSPQIEKPKAESPKVEVPQIQSPKVEVPQSKLLGYYQSLKDSFNYGYKYLTDTYKSYKEKYDTAKYYYNTYYKYKGAIDKAVLTLLGDGSKSYIQPLKVDDKNGYLAKSYAQVRNYVTESINTGKVLYTFYQNPTLVKTAIKAQETASSIKNTITGLFNSFWK</sequence>
<proteinExistence type="inferred from homology"/>
<protein>
    <recommendedName>
        <fullName>Immunoglobulin-binding protein Sbi</fullName>
    </recommendedName>
</protein>
<comment type="function">
    <text evidence="1">Plays a role in the inhibition of both the innate and adaptive immune responses. Possesses two N-terminal domains that bind the Fc region of IgG and two domains that form a tripartite complex with complement factors C3b and CFH. By recruiting CFH and C3b, the secreted form acts as a potent complement inhibitor of the alternative pathway-mediated lysis.</text>
</comment>
<comment type="subunit">
    <text evidence="1 2">Interacts (via sbi-I and sbi-II domains) with the Fc region of mammalian immunoglobulin G (IgG) proteins. Interacts (via sbi-III and sbi-IV domains) with host complement C3. Interacts (via sbi-III and sbi-IV domains) with host CFH (By similarity). Interacts (via sbi-IV domain) with beta-2-glycoprotein 1/APOH (By similarity).</text>
</comment>
<comment type="subcellular location">
    <subcellularLocation>
        <location evidence="1">Secreted</location>
    </subcellularLocation>
    <subcellularLocation>
        <location evidence="1">Cell membrane</location>
    </subcellularLocation>
    <text evidence="1">Occurs both extracellularly and associated with the cytoplasmic membrane where only the domains I and II are exposed to the extracellular media. Membrane association occurs via binding to lipoteichoic acid.</text>
</comment>
<comment type="domain">
    <text evidence="1">Sbi-I and sbi-II domains provide protection only when anchored to the cell surface, whereas only the secreted sbi-III and sbi-IV domains are biologically active.</text>
</comment>
<comment type="similarity">
    <text evidence="5">Belongs to the immunoglobulin-binding protein Sbi family.</text>
</comment>
<gene>
    <name type="primary">sbi</name>
    <name type="ordered locus">MW2341</name>
</gene>
<evidence type="ECO:0000250" key="1">
    <source>
        <dbReference type="UniProtKB" id="A6QJQ7"/>
    </source>
</evidence>
<evidence type="ECO:0000250" key="2">
    <source>
        <dbReference type="UniProtKB" id="Q931F4"/>
    </source>
</evidence>
<evidence type="ECO:0000255" key="3"/>
<evidence type="ECO:0000256" key="4">
    <source>
        <dbReference type="SAM" id="MobiDB-lite"/>
    </source>
</evidence>
<evidence type="ECO:0000305" key="5"/>
<keyword id="KW-1003">Cell membrane</keyword>
<keyword id="KW-0390">IgG-binding protein</keyword>
<keyword id="KW-0472">Membrane</keyword>
<keyword id="KW-0677">Repeat</keyword>
<keyword id="KW-0964">Secreted</keyword>
<keyword id="KW-0732">Signal</keyword>
<keyword id="KW-0843">Virulence</keyword>
<dbReference type="EMBL" id="BA000033">
    <property type="protein sequence ID" value="BAB96206.1"/>
    <property type="molecule type" value="Genomic_DNA"/>
</dbReference>
<dbReference type="RefSeq" id="WP_000792571.1">
    <property type="nucleotide sequence ID" value="NC_003923.1"/>
</dbReference>
<dbReference type="SMR" id="Q8NV09"/>
<dbReference type="KEGG" id="sam:MW2341"/>
<dbReference type="HOGENOM" id="CLU_051343_0_0_9"/>
<dbReference type="PRO" id="PR:Q8NV09"/>
<dbReference type="GO" id="GO:0005576">
    <property type="term" value="C:extracellular region"/>
    <property type="evidence" value="ECO:0007669"/>
    <property type="project" value="UniProtKB-SubCell"/>
</dbReference>
<dbReference type="GO" id="GO:0005886">
    <property type="term" value="C:plasma membrane"/>
    <property type="evidence" value="ECO:0007669"/>
    <property type="project" value="UniProtKB-SubCell"/>
</dbReference>
<dbReference type="GO" id="GO:0019864">
    <property type="term" value="F:IgG binding"/>
    <property type="evidence" value="ECO:0007669"/>
    <property type="project" value="UniProtKB-KW"/>
</dbReference>
<dbReference type="Gene3D" id="1.20.5.420">
    <property type="entry name" value="Immunoglobulin FC, subunit C"/>
    <property type="match status" value="2"/>
</dbReference>
<dbReference type="Gene3D" id="1.10.10.1270">
    <property type="entry name" value="Sbi, C3 binding domain IV"/>
    <property type="match status" value="1"/>
</dbReference>
<dbReference type="InterPro" id="IPR009063">
    <property type="entry name" value="Ig/albumin-bd_sf"/>
</dbReference>
<dbReference type="InterPro" id="IPR021657">
    <property type="entry name" value="IgG-binding_Sbi_dom_IV"/>
</dbReference>
<dbReference type="InterPro" id="IPR003132">
    <property type="entry name" value="Protein_A_Ig-bd"/>
</dbReference>
<dbReference type="InterPro" id="IPR041909">
    <property type="entry name" value="Sbi_C3_db_domIV"/>
</dbReference>
<dbReference type="Pfam" id="PF02216">
    <property type="entry name" value="B"/>
    <property type="match status" value="2"/>
</dbReference>
<dbReference type="Pfam" id="PF11621">
    <property type="entry name" value="Sbi-IV"/>
    <property type="match status" value="1"/>
</dbReference>
<dbReference type="SUPFAM" id="SSF46997">
    <property type="entry name" value="Bacterial immunoglobulin/albumin-binding domains"/>
    <property type="match status" value="2"/>
</dbReference>
<name>SBI_STAAW</name>
<accession>Q8NV09</accession>
<organism>
    <name type="scientific">Staphylococcus aureus (strain MW2)</name>
    <dbReference type="NCBI Taxonomy" id="196620"/>
    <lineage>
        <taxon>Bacteria</taxon>
        <taxon>Bacillati</taxon>
        <taxon>Bacillota</taxon>
        <taxon>Bacilli</taxon>
        <taxon>Bacillales</taxon>
        <taxon>Staphylococcaceae</taxon>
        <taxon>Staphylococcus</taxon>
    </lineage>
</organism>
<feature type="signal peptide" evidence="3">
    <location>
        <begin position="1"/>
        <end position="29"/>
    </location>
</feature>
<feature type="chain" id="PRO_0000361892" description="Immunoglobulin-binding protein Sbi">
    <location>
        <begin position="30"/>
        <end position="437"/>
    </location>
</feature>
<feature type="repeat" description="B 1">
    <location>
        <begin position="43"/>
        <end position="94"/>
    </location>
</feature>
<feature type="repeat" description="B 2">
    <location>
        <begin position="95"/>
        <end position="148"/>
    </location>
</feature>
<feature type="repeat" description="2-1">
    <location>
        <begin position="267"/>
        <end position="271"/>
    </location>
</feature>
<feature type="repeat" description="2-2">
    <location>
        <begin position="272"/>
        <end position="276"/>
    </location>
</feature>
<feature type="repeat" description="2-3">
    <location>
        <begin position="277"/>
        <end position="281"/>
    </location>
</feature>
<feature type="repeat" description="2-4">
    <location>
        <begin position="282"/>
        <end position="286"/>
    </location>
</feature>
<feature type="repeat" description="2-5">
    <location>
        <begin position="287"/>
        <end position="291"/>
    </location>
</feature>
<feature type="repeat" description="2-6">
    <location>
        <begin position="292"/>
        <end position="296"/>
    </location>
</feature>
<feature type="repeat" description="2-7">
    <location>
        <begin position="297"/>
        <end position="301"/>
    </location>
</feature>
<feature type="repeat" description="2-8">
    <location>
        <begin position="302"/>
        <end position="306"/>
    </location>
</feature>
<feature type="region of interest" description="Sbi-I">
    <location>
        <begin position="42"/>
        <end position="94"/>
    </location>
</feature>
<feature type="region of interest" description="Sbi-II">
    <location>
        <begin position="103"/>
        <end position="153"/>
    </location>
</feature>
<feature type="region of interest" description="Sbi-III">
    <location>
        <begin position="154"/>
        <end position="195"/>
    </location>
</feature>
<feature type="region of interest" description="Sbi-IV">
    <location>
        <begin position="196"/>
        <end position="253"/>
    </location>
</feature>
<feature type="region of interest" description="8 X 5 AA tandem repeat of P-[KQ]-[AISV]-[EKQ]-[AKLSV]">
    <location>
        <begin position="267"/>
        <end position="306"/>
    </location>
</feature>
<feature type="region of interest" description="Disordered" evidence="4">
    <location>
        <begin position="267"/>
        <end position="295"/>
    </location>
</feature>
<reference key="1">
    <citation type="journal article" date="2002" name="Lancet">
        <title>Genome and virulence determinants of high virulence community-acquired MRSA.</title>
        <authorList>
            <person name="Baba T."/>
            <person name="Takeuchi F."/>
            <person name="Kuroda M."/>
            <person name="Yuzawa H."/>
            <person name="Aoki K."/>
            <person name="Oguchi A."/>
            <person name="Nagai Y."/>
            <person name="Iwama N."/>
            <person name="Asano K."/>
            <person name="Naimi T."/>
            <person name="Kuroda H."/>
            <person name="Cui L."/>
            <person name="Yamamoto K."/>
            <person name="Hiramatsu K."/>
        </authorList>
    </citation>
    <scope>NUCLEOTIDE SEQUENCE [LARGE SCALE GENOMIC DNA]</scope>
    <source>
        <strain>MW2</strain>
    </source>
</reference>